<dbReference type="EMBL" id="CP000758">
    <property type="protein sequence ID" value="ABS13523.1"/>
    <property type="molecule type" value="Genomic_DNA"/>
</dbReference>
<dbReference type="RefSeq" id="WP_006473268.1">
    <property type="nucleotide sequence ID" value="NC_009667.1"/>
</dbReference>
<dbReference type="SMR" id="A6WX19"/>
<dbReference type="STRING" id="439375.Oant_0801"/>
<dbReference type="GeneID" id="61318752"/>
<dbReference type="KEGG" id="oan:Oant_0801"/>
<dbReference type="eggNOG" id="COG0291">
    <property type="taxonomic scope" value="Bacteria"/>
</dbReference>
<dbReference type="HOGENOM" id="CLU_169643_2_1_5"/>
<dbReference type="Proteomes" id="UP000002301">
    <property type="component" value="Chromosome 1"/>
</dbReference>
<dbReference type="GO" id="GO:0022625">
    <property type="term" value="C:cytosolic large ribosomal subunit"/>
    <property type="evidence" value="ECO:0007669"/>
    <property type="project" value="TreeGrafter"/>
</dbReference>
<dbReference type="GO" id="GO:0003735">
    <property type="term" value="F:structural constituent of ribosome"/>
    <property type="evidence" value="ECO:0007669"/>
    <property type="project" value="InterPro"/>
</dbReference>
<dbReference type="GO" id="GO:0006412">
    <property type="term" value="P:translation"/>
    <property type="evidence" value="ECO:0007669"/>
    <property type="project" value="UniProtKB-UniRule"/>
</dbReference>
<dbReference type="FunFam" id="4.10.410.60:FF:000001">
    <property type="entry name" value="50S ribosomal protein L35"/>
    <property type="match status" value="1"/>
</dbReference>
<dbReference type="Gene3D" id="4.10.410.60">
    <property type="match status" value="1"/>
</dbReference>
<dbReference type="HAMAP" id="MF_00514">
    <property type="entry name" value="Ribosomal_bL35"/>
    <property type="match status" value="1"/>
</dbReference>
<dbReference type="InterPro" id="IPR001706">
    <property type="entry name" value="Ribosomal_bL35"/>
</dbReference>
<dbReference type="InterPro" id="IPR021137">
    <property type="entry name" value="Ribosomal_bL35-like"/>
</dbReference>
<dbReference type="InterPro" id="IPR018265">
    <property type="entry name" value="Ribosomal_bL35_CS"/>
</dbReference>
<dbReference type="InterPro" id="IPR037229">
    <property type="entry name" value="Ribosomal_bL35_sf"/>
</dbReference>
<dbReference type="NCBIfam" id="TIGR00001">
    <property type="entry name" value="rpmI_bact"/>
    <property type="match status" value="1"/>
</dbReference>
<dbReference type="PANTHER" id="PTHR33343">
    <property type="entry name" value="54S RIBOSOMAL PROTEIN BL35M"/>
    <property type="match status" value="1"/>
</dbReference>
<dbReference type="PANTHER" id="PTHR33343:SF1">
    <property type="entry name" value="LARGE RIBOSOMAL SUBUNIT PROTEIN BL35M"/>
    <property type="match status" value="1"/>
</dbReference>
<dbReference type="Pfam" id="PF01632">
    <property type="entry name" value="Ribosomal_L35p"/>
    <property type="match status" value="1"/>
</dbReference>
<dbReference type="PRINTS" id="PR00064">
    <property type="entry name" value="RIBOSOMALL35"/>
</dbReference>
<dbReference type="SUPFAM" id="SSF143034">
    <property type="entry name" value="L35p-like"/>
    <property type="match status" value="1"/>
</dbReference>
<dbReference type="PROSITE" id="PS00936">
    <property type="entry name" value="RIBOSOMAL_L35"/>
    <property type="match status" value="1"/>
</dbReference>
<evidence type="ECO:0000255" key="1">
    <source>
        <dbReference type="HAMAP-Rule" id="MF_00514"/>
    </source>
</evidence>
<evidence type="ECO:0000305" key="2"/>
<name>RL35_BRUA4</name>
<keyword id="KW-1185">Reference proteome</keyword>
<keyword id="KW-0687">Ribonucleoprotein</keyword>
<keyword id="KW-0689">Ribosomal protein</keyword>
<accession>A6WX19</accession>
<reference key="1">
    <citation type="journal article" date="2011" name="J. Bacteriol.">
        <title>Genome of Ochrobactrum anthropi ATCC 49188 T, a versatile opportunistic pathogen and symbiont of several eukaryotic hosts.</title>
        <authorList>
            <person name="Chain P.S."/>
            <person name="Lang D.M."/>
            <person name="Comerci D.J."/>
            <person name="Malfatti S.A."/>
            <person name="Vergez L.M."/>
            <person name="Shin M."/>
            <person name="Ugalde R.A."/>
            <person name="Garcia E."/>
            <person name="Tolmasky M.E."/>
        </authorList>
    </citation>
    <scope>NUCLEOTIDE SEQUENCE [LARGE SCALE GENOMIC DNA]</scope>
    <source>
        <strain>ATCC 49188 / DSM 6882 / CCUG 24695 / JCM 21032 / LMG 3331 / NBRC 15819 / NCTC 12168 / Alc 37</strain>
    </source>
</reference>
<comment type="similarity">
    <text evidence="1">Belongs to the bacterial ribosomal protein bL35 family.</text>
</comment>
<sequence length="66" mass="7200">MPKMKTKSAAKKRFKITGTGKIKAAAAGKRHGMIKRSNKFIRDARGTMVLADADAKIVKQFLPNGL</sequence>
<organism>
    <name type="scientific">Brucella anthropi (strain ATCC 49188 / DSM 6882 / CCUG 24695 / JCM 21032 / LMG 3331 / NBRC 15819 / NCTC 12168 / Alc 37)</name>
    <name type="common">Ochrobactrum anthropi</name>
    <dbReference type="NCBI Taxonomy" id="439375"/>
    <lineage>
        <taxon>Bacteria</taxon>
        <taxon>Pseudomonadati</taxon>
        <taxon>Pseudomonadota</taxon>
        <taxon>Alphaproteobacteria</taxon>
        <taxon>Hyphomicrobiales</taxon>
        <taxon>Brucellaceae</taxon>
        <taxon>Brucella/Ochrobactrum group</taxon>
        <taxon>Brucella</taxon>
    </lineage>
</organism>
<gene>
    <name evidence="1" type="primary">rpmI</name>
    <name type="ordered locus">Oant_0801</name>
</gene>
<protein>
    <recommendedName>
        <fullName evidence="1">Large ribosomal subunit protein bL35</fullName>
    </recommendedName>
    <alternativeName>
        <fullName evidence="2">50S ribosomal protein L35</fullName>
    </alternativeName>
</protein>
<proteinExistence type="inferred from homology"/>
<feature type="chain" id="PRO_1000050730" description="Large ribosomal subunit protein bL35">
    <location>
        <begin position="1"/>
        <end position="66"/>
    </location>
</feature>